<feature type="chain" id="PRO_0000193643" description="Eukaryotic translation initiation factor 4E-1">
    <location>
        <begin position="1"/>
        <end position="212"/>
    </location>
</feature>
<feature type="disulfide bond" evidence="1">
    <location>
        <begin position="125"/>
        <end position="129"/>
    </location>
</feature>
<reference key="1">
    <citation type="journal article" date="1998" name="J. Biol. Chem.">
        <title>Multiple isoforms of eukaryotic protein synthesis initiation factor 4E in Caenorhabditis elegans can distinguish between mono- and trimethylated mRNA cap structures.</title>
        <authorList>
            <person name="Jankowska-Anyszka M."/>
            <person name="Lamphear B.J."/>
            <person name="Aamodt E.J."/>
            <person name="Harrington T."/>
            <person name="Darzynkiewicz E."/>
            <person name="Stolarski R."/>
            <person name="Rhoads R.E."/>
        </authorList>
    </citation>
    <scope>NUCLEOTIDE SEQUENCE [GENOMIC DNA]</scope>
    <scope>FUNCTION</scope>
    <source>
        <strain>Bristol N2</strain>
    </source>
</reference>
<reference key="2">
    <citation type="journal article" date="2001" name="Development">
        <title>An isoform of eIF4E is a component of germ granules and is required for spermatogenesis in C. elegans.</title>
        <authorList>
            <person name="Amiri A."/>
            <person name="Keiper B.D."/>
            <person name="Kawasaki I."/>
            <person name="Fan Y."/>
            <person name="Kohara Y."/>
            <person name="Rhoads R.E."/>
            <person name="Strome S."/>
        </authorList>
    </citation>
    <scope>NUCLEOTIDE SEQUENCE [GENOMIC DNA]</scope>
    <scope>FUNCTION</scope>
    <scope>INTERACTION WITH PGL-1</scope>
    <scope>TISSUE SPECIFICITY</scope>
    <scope>SUBCELLULAR LOCATION</scope>
    <scope>DEVELOPMENTAL STAGE</scope>
    <scope>DISRUPTION PHENOTYPE</scope>
    <source>
        <strain>Bristol N2</strain>
    </source>
</reference>
<reference key="3">
    <citation type="journal article" date="1998" name="Science">
        <title>Genome sequence of the nematode C. elegans: a platform for investigating biology.</title>
        <authorList>
            <consortium name="The C. elegans sequencing consortium"/>
        </authorList>
    </citation>
    <scope>NUCLEOTIDE SEQUENCE [LARGE SCALE GENOMIC DNA]</scope>
    <source>
        <strain>Bristol N2</strain>
    </source>
</reference>
<reference key="4">
    <citation type="journal article" date="2000" name="J. Biol. Chem.">
        <title>Functional characterization of five eIF4E isoforms in Caenorhabditis elegans.</title>
        <authorList>
            <person name="Keiper B.D."/>
            <person name="Lamphear B.J."/>
            <person name="Deshpande A.M."/>
            <person name="Jankowska-Anyszka M."/>
            <person name="Aamodt E.J."/>
            <person name="Blumenthal T."/>
            <person name="Rhoads R.E."/>
        </authorList>
    </citation>
    <scope>FUNCTION</scope>
    <source>
        <strain>Bristol N2</strain>
    </source>
</reference>
<reference key="5">
    <citation type="journal article" date="2009" name="J. Cell Biol.">
        <title>An eIF4E-binding protein regulates katanin protein levels in C. elegans embryos.</title>
        <authorList>
            <person name="Li W."/>
            <person name="DeBella L.R."/>
            <person name="Guven-Ozkan T."/>
            <person name="Lin R."/>
            <person name="Rose L.S."/>
        </authorList>
    </citation>
    <scope>INTERACTION WITH IFET-1</scope>
</reference>
<sequence>MTETEQTTAPIYPLKRNWTWWYLNDERNKSWEDRLKKVYTFNTVSEFWALYDAIRPPSGLNALCDYNVFRDDIQPMWEVPENSNGGRWLIVIDKGKTPEMVDAIWLEILMALVGEQFGKDMESICGLVCNVRGKGSKISVWTKDCNDDETNMRIGVVLKEKLMAASKDHSKPLFDVIRYEDHESCQKKTSSVVKAKLSLHSSDAPVAEKSAV</sequence>
<keyword id="KW-0963">Cytoplasm</keyword>
<keyword id="KW-0217">Developmental protein</keyword>
<keyword id="KW-0221">Differentiation</keyword>
<keyword id="KW-1015">Disulfide bond</keyword>
<keyword id="KW-0396">Initiation factor</keyword>
<keyword id="KW-0648">Protein biosynthesis</keyword>
<keyword id="KW-1185">Reference proteome</keyword>
<keyword id="KW-0694">RNA-binding</keyword>
<keyword id="KW-0744">Spermatogenesis</keyword>
<keyword id="KW-0810">Translation regulation</keyword>
<organism>
    <name type="scientific">Caenorhabditis elegans</name>
    <dbReference type="NCBI Taxonomy" id="6239"/>
    <lineage>
        <taxon>Eukaryota</taxon>
        <taxon>Metazoa</taxon>
        <taxon>Ecdysozoa</taxon>
        <taxon>Nematoda</taxon>
        <taxon>Chromadorea</taxon>
        <taxon>Rhabditida</taxon>
        <taxon>Rhabditina</taxon>
        <taxon>Rhabditomorpha</taxon>
        <taxon>Rhabditoidea</taxon>
        <taxon>Rhabditidae</taxon>
        <taxon>Peloderinae</taxon>
        <taxon>Caenorhabditis</taxon>
    </lineage>
</organism>
<protein>
    <recommendedName>
        <fullName>Eukaryotic translation initiation factor 4E-1</fullName>
        <shortName>eIF-4E-1</shortName>
        <shortName>eIF4E-1</shortName>
    </recommendedName>
    <alternativeName>
        <fullName>eIF-4F 25 kDa subunit</fullName>
    </alternativeName>
    <alternativeName>
        <fullName>mRNA cap-binding protein</fullName>
    </alternativeName>
</protein>
<dbReference type="EMBL" id="Z81546">
    <property type="protein sequence ID" value="CAB04454.2"/>
    <property type="molecule type" value="Genomic_DNA"/>
</dbReference>
<dbReference type="PIR" id="T22530">
    <property type="entry name" value="T22530"/>
</dbReference>
<dbReference type="RefSeq" id="NP_001255197.1">
    <property type="nucleotide sequence ID" value="NM_001268268.2"/>
</dbReference>
<dbReference type="SMR" id="O45551"/>
<dbReference type="BioGRID" id="41924">
    <property type="interactions" value="10"/>
</dbReference>
<dbReference type="FunCoup" id="O45551">
    <property type="interactions" value="384"/>
</dbReference>
<dbReference type="IntAct" id="O45551">
    <property type="interactions" value="4"/>
</dbReference>
<dbReference type="STRING" id="6239.F53A2.6a.2"/>
<dbReference type="iPTMnet" id="O45551"/>
<dbReference type="PaxDb" id="6239-F53A2.6a"/>
<dbReference type="PeptideAtlas" id="O45551"/>
<dbReference type="EnsemblMetazoa" id="F53A2.6b.1">
    <property type="protein sequence ID" value="F53A2.6b.1"/>
    <property type="gene ID" value="WBGene00002059"/>
</dbReference>
<dbReference type="GeneID" id="176755"/>
<dbReference type="KEGG" id="cel:CELE_F53A2.6"/>
<dbReference type="UCSC" id="F53A2.6.2">
    <property type="organism name" value="c. elegans"/>
</dbReference>
<dbReference type="AGR" id="WB:WBGene00002059"/>
<dbReference type="CTD" id="176755"/>
<dbReference type="WormBase" id="F53A2.6b">
    <property type="protein sequence ID" value="CE31809"/>
    <property type="gene ID" value="WBGene00002059"/>
    <property type="gene designation" value="ife-1"/>
</dbReference>
<dbReference type="eggNOG" id="KOG1670">
    <property type="taxonomic scope" value="Eukaryota"/>
</dbReference>
<dbReference type="GeneTree" id="ENSGT01060000253277"/>
<dbReference type="HOGENOM" id="CLU_043552_1_0_1"/>
<dbReference type="InParanoid" id="O45551"/>
<dbReference type="OrthoDB" id="590761at2759"/>
<dbReference type="PhylomeDB" id="O45551"/>
<dbReference type="Reactome" id="R-CEL-1169408">
    <property type="pathway name" value="ISG15 antiviral mechanism"/>
</dbReference>
<dbReference type="Reactome" id="R-CEL-156827">
    <property type="pathway name" value="L13a-mediated translational silencing of Ceruloplasmin expression"/>
</dbReference>
<dbReference type="Reactome" id="R-CEL-72649">
    <property type="pathway name" value="Translation initiation complex formation"/>
</dbReference>
<dbReference type="Reactome" id="R-CEL-72662">
    <property type="pathway name" value="Activation of the mRNA upon binding of the cap-binding complex and eIFs, and subsequent binding to 43S"/>
</dbReference>
<dbReference type="Reactome" id="R-CEL-72702">
    <property type="pathway name" value="Ribosomal scanning and start codon recognition"/>
</dbReference>
<dbReference type="CD-CODE" id="73A75392">
    <property type="entry name" value="P-granule"/>
</dbReference>
<dbReference type="PRO" id="PR:O45551"/>
<dbReference type="Proteomes" id="UP000001940">
    <property type="component" value="Chromosome III"/>
</dbReference>
<dbReference type="Bgee" id="WBGene00002059">
    <property type="expression patterns" value="Expressed in reproductive system and 6 other cell types or tissues"/>
</dbReference>
<dbReference type="ExpressionAtlas" id="O45551">
    <property type="expression patterns" value="baseline and differential"/>
</dbReference>
<dbReference type="GO" id="GO:0005737">
    <property type="term" value="C:cytoplasm"/>
    <property type="evidence" value="ECO:0000314"/>
    <property type="project" value="WormBase"/>
</dbReference>
<dbReference type="GO" id="GO:0016281">
    <property type="term" value="C:eukaryotic translation initiation factor 4F complex"/>
    <property type="evidence" value="ECO:0000318"/>
    <property type="project" value="GO_Central"/>
</dbReference>
<dbReference type="GO" id="GO:0043186">
    <property type="term" value="C:P granule"/>
    <property type="evidence" value="ECO:0000314"/>
    <property type="project" value="WormBase"/>
</dbReference>
<dbReference type="GO" id="GO:0000340">
    <property type="term" value="F:RNA 7-methylguanosine cap binding"/>
    <property type="evidence" value="ECO:0000314"/>
    <property type="project" value="WormBase"/>
</dbReference>
<dbReference type="GO" id="GO:0000341">
    <property type="term" value="F:RNA trimethylguanosine cap binding"/>
    <property type="evidence" value="ECO:0000314"/>
    <property type="project" value="WormBase"/>
</dbReference>
<dbReference type="GO" id="GO:0003743">
    <property type="term" value="F:translation initiation factor activity"/>
    <property type="evidence" value="ECO:0000318"/>
    <property type="project" value="GO_Central"/>
</dbReference>
<dbReference type="GO" id="GO:0009792">
    <property type="term" value="P:embryo development ending in birth or egg hatching"/>
    <property type="evidence" value="ECO:0000316"/>
    <property type="project" value="WormBase"/>
</dbReference>
<dbReference type="GO" id="GO:0001556">
    <property type="term" value="P:oocyte maturation"/>
    <property type="evidence" value="ECO:0000315"/>
    <property type="project" value="WormBase"/>
</dbReference>
<dbReference type="GO" id="GO:0006417">
    <property type="term" value="P:regulation of translation"/>
    <property type="evidence" value="ECO:0007669"/>
    <property type="project" value="UniProtKB-KW"/>
</dbReference>
<dbReference type="GO" id="GO:0007286">
    <property type="term" value="P:spermatid development"/>
    <property type="evidence" value="ECO:0000315"/>
    <property type="project" value="WormBase"/>
</dbReference>
<dbReference type="GO" id="GO:0006413">
    <property type="term" value="P:translational initiation"/>
    <property type="evidence" value="ECO:0000318"/>
    <property type="project" value="GO_Central"/>
</dbReference>
<dbReference type="FunFam" id="3.30.760.10:FF:000017">
    <property type="entry name" value="Eukaryotic translation initiation factor 4E-1"/>
    <property type="match status" value="1"/>
</dbReference>
<dbReference type="Gene3D" id="3.30.760.10">
    <property type="entry name" value="RNA Cap, Translation Initiation Factor Eif4e"/>
    <property type="match status" value="1"/>
</dbReference>
<dbReference type="InterPro" id="IPR023398">
    <property type="entry name" value="TIF_eIF4e-like"/>
</dbReference>
<dbReference type="InterPro" id="IPR001040">
    <property type="entry name" value="TIF_eIF_4E"/>
</dbReference>
<dbReference type="InterPro" id="IPR019770">
    <property type="entry name" value="TIF_eIF_4E_CS"/>
</dbReference>
<dbReference type="PANTHER" id="PTHR11960">
    <property type="entry name" value="EUKARYOTIC TRANSLATION INITIATION FACTOR 4E RELATED"/>
    <property type="match status" value="1"/>
</dbReference>
<dbReference type="PANTHER" id="PTHR11960:SF8">
    <property type="entry name" value="EUKARYOTIC TRANSLATION INITIATION FACTOR 4E1-RELATED"/>
    <property type="match status" value="1"/>
</dbReference>
<dbReference type="Pfam" id="PF01652">
    <property type="entry name" value="IF4E"/>
    <property type="match status" value="1"/>
</dbReference>
<dbReference type="SUPFAM" id="SSF55418">
    <property type="entry name" value="eIF4e-like"/>
    <property type="match status" value="1"/>
</dbReference>
<dbReference type="PROSITE" id="PS00813">
    <property type="entry name" value="IF4E"/>
    <property type="match status" value="1"/>
</dbReference>
<comment type="function">
    <text evidence="2 3 5">Recognizes and binds the 7-methylguanosine-containing mRNA cap during an early step in the initiation of protein synthesis and facilitates ribosome binding by inducing the unwinding of the mRNAs secondary structures. All 5 eIF4E proteins bind monomethyl cap structures. Only ife-1, ife-2 and ife-5 bind trimethyl cap structures which result from trans-splicing. Translation of trimethyl cap structure mRNAs may be regulated by intracellular redox state; disulfide bonds change the width and depth of the cap-binding cavity determining selectivity to mRNA caps. Required for progression through meiotic divisions during spermatogenesis and for the production of viable sperm. It is not required during oogenesis.</text>
</comment>
<comment type="subunit">
    <text evidence="3 4">EIF4F is a multi-subunit complex, the composition of which varies with external and internal environmental conditions. It is composed of at least EIF4A, EIF4E and EIF4G. EIF4E is also known to interact with other partners, including pgl-1 (PubMed:11641215). Interacts with ifet-1 (PubMed:19786575).</text>
</comment>
<comment type="interaction">
    <interactant intactId="EBI-330148">
        <id>O45551</id>
    </interactant>
    <interactant intactId="EBI-332200">
        <id>Q9TZQ3</id>
        <label>pgl-1</label>
    </interactant>
    <organismsDiffer>false</organismsDiffer>
    <experiments>2</experiments>
</comment>
<comment type="subcellular location">
    <subcellularLocation>
        <location evidence="3">Cytoplasm</location>
    </subcellularLocation>
    <text>When associated with pgl-1.</text>
</comment>
<comment type="tissue specificity">
    <text evidence="3">Enriched in the germline from L3 larvae to adults; regions of the gonad undergoing spermatogenesis. Expressed in germ granules (P granules); when associated with pgl-1.</text>
</comment>
<comment type="developmental stage">
    <text evidence="3">Expressed both maternally and zygotically. Ubiquitous embryonic expression until the 100-200 cell stage then disappears by the 300-400 cell stage. Expressed again in L3 larvae through to adulthood.</text>
</comment>
<comment type="disruption phenotype">
    <text evidence="3">Defects can cause a delay in spermatogenesis, temperature-sensitive sterility and defective sperm.</text>
</comment>
<comment type="similarity">
    <text evidence="6">Belongs to the eukaryotic initiation factor 4E family.</text>
</comment>
<name>IF4E1_CAEEL</name>
<proteinExistence type="evidence at protein level"/>
<evidence type="ECO:0000250" key="1"/>
<evidence type="ECO:0000269" key="2">
    <source>
    </source>
</evidence>
<evidence type="ECO:0000269" key="3">
    <source>
    </source>
</evidence>
<evidence type="ECO:0000269" key="4">
    <source>
    </source>
</evidence>
<evidence type="ECO:0000269" key="5">
    <source>
    </source>
</evidence>
<evidence type="ECO:0000305" key="6"/>
<accession>O45551</accession>
<gene>
    <name type="primary">ife-1</name>
    <name type="ORF">F53A2.6</name>
</gene>